<accession>A4WNM7</accession>
<dbReference type="EC" id="1.1.1.37" evidence="1"/>
<dbReference type="EMBL" id="CP000661">
    <property type="protein sequence ID" value="ABP68991.1"/>
    <property type="molecule type" value="Genomic_DNA"/>
</dbReference>
<dbReference type="SMR" id="A4WNM7"/>
<dbReference type="STRING" id="349102.Rsph17025_0080"/>
<dbReference type="KEGG" id="rsq:Rsph17025_0080"/>
<dbReference type="eggNOG" id="COG0039">
    <property type="taxonomic scope" value="Bacteria"/>
</dbReference>
<dbReference type="HOGENOM" id="CLU_045401_2_1_5"/>
<dbReference type="BioCyc" id="RSPH349102:G1G8M-79-MONOMER"/>
<dbReference type="GO" id="GO:0004459">
    <property type="term" value="F:L-lactate dehydrogenase activity"/>
    <property type="evidence" value="ECO:0007669"/>
    <property type="project" value="TreeGrafter"/>
</dbReference>
<dbReference type="GO" id="GO:0030060">
    <property type="term" value="F:L-malate dehydrogenase (NAD+) activity"/>
    <property type="evidence" value="ECO:0007669"/>
    <property type="project" value="UniProtKB-UniRule"/>
</dbReference>
<dbReference type="GO" id="GO:0006089">
    <property type="term" value="P:lactate metabolic process"/>
    <property type="evidence" value="ECO:0007669"/>
    <property type="project" value="TreeGrafter"/>
</dbReference>
<dbReference type="GO" id="GO:0006099">
    <property type="term" value="P:tricarboxylic acid cycle"/>
    <property type="evidence" value="ECO:0007669"/>
    <property type="project" value="UniProtKB-UniRule"/>
</dbReference>
<dbReference type="CDD" id="cd01339">
    <property type="entry name" value="LDH-like_MDH"/>
    <property type="match status" value="1"/>
</dbReference>
<dbReference type="FunFam" id="3.40.50.720:FF:000018">
    <property type="entry name" value="Malate dehydrogenase"/>
    <property type="match status" value="1"/>
</dbReference>
<dbReference type="FunFam" id="3.90.110.10:FF:000004">
    <property type="entry name" value="Malate dehydrogenase"/>
    <property type="match status" value="1"/>
</dbReference>
<dbReference type="Gene3D" id="3.90.110.10">
    <property type="entry name" value="Lactate dehydrogenase/glycoside hydrolase, family 4, C-terminal"/>
    <property type="match status" value="1"/>
</dbReference>
<dbReference type="Gene3D" id="3.40.50.720">
    <property type="entry name" value="NAD(P)-binding Rossmann-like Domain"/>
    <property type="match status" value="1"/>
</dbReference>
<dbReference type="HAMAP" id="MF_00487">
    <property type="entry name" value="Malate_dehydrog_3"/>
    <property type="match status" value="1"/>
</dbReference>
<dbReference type="InterPro" id="IPR001557">
    <property type="entry name" value="L-lactate/malate_DH"/>
</dbReference>
<dbReference type="InterPro" id="IPR022383">
    <property type="entry name" value="Lactate/malate_DH_C"/>
</dbReference>
<dbReference type="InterPro" id="IPR001236">
    <property type="entry name" value="Lactate/malate_DH_N"/>
</dbReference>
<dbReference type="InterPro" id="IPR015955">
    <property type="entry name" value="Lactate_DH/Glyco_Ohase_4_C"/>
</dbReference>
<dbReference type="InterPro" id="IPR011275">
    <property type="entry name" value="Malate_DH_type3"/>
</dbReference>
<dbReference type="InterPro" id="IPR036291">
    <property type="entry name" value="NAD(P)-bd_dom_sf"/>
</dbReference>
<dbReference type="NCBIfam" id="TIGR01763">
    <property type="entry name" value="MalateDH_bact"/>
    <property type="match status" value="1"/>
</dbReference>
<dbReference type="NCBIfam" id="NF004863">
    <property type="entry name" value="PRK06223.1"/>
    <property type="match status" value="1"/>
</dbReference>
<dbReference type="PANTHER" id="PTHR43128">
    <property type="entry name" value="L-2-HYDROXYCARBOXYLATE DEHYDROGENASE (NAD(P)(+))"/>
    <property type="match status" value="1"/>
</dbReference>
<dbReference type="PANTHER" id="PTHR43128:SF16">
    <property type="entry name" value="L-LACTATE DEHYDROGENASE"/>
    <property type="match status" value="1"/>
</dbReference>
<dbReference type="Pfam" id="PF02866">
    <property type="entry name" value="Ldh_1_C"/>
    <property type="match status" value="1"/>
</dbReference>
<dbReference type="Pfam" id="PF00056">
    <property type="entry name" value="Ldh_1_N"/>
    <property type="match status" value="1"/>
</dbReference>
<dbReference type="PIRSF" id="PIRSF000102">
    <property type="entry name" value="Lac_mal_DH"/>
    <property type="match status" value="1"/>
</dbReference>
<dbReference type="PRINTS" id="PR00086">
    <property type="entry name" value="LLDHDRGNASE"/>
</dbReference>
<dbReference type="SUPFAM" id="SSF56327">
    <property type="entry name" value="LDH C-terminal domain-like"/>
    <property type="match status" value="1"/>
</dbReference>
<dbReference type="SUPFAM" id="SSF51735">
    <property type="entry name" value="NAD(P)-binding Rossmann-fold domains"/>
    <property type="match status" value="1"/>
</dbReference>
<sequence>MARPKIALIGAGQIGGTLAHLAAIKELGDVVLFDIAEGTPQGKALDIAQSGPSEGFDAVMKGANSYEDIAGADVCIVTAGVPRKPGMSRDDLIGINLKVMKSVGEGIKAHAPNAFVICITNPLDAMVWALQQFSGLPPEKVVGMAGVLDSARFRHFLSVEFNVSMRDVTAFVLGGHGDTMVPLVRYSTVAGIPLPDLVQMGWTSQEKLDQIVQRTRDGGAEIVGLLKTGSAYYAPATSAIEMAEAYLKDQKRLLPCAAWVDGAFGLDGMYVGVPTIIGAGGIEKVVDIKLNADEQAMFDKSVDAVKGLVAACKGIEPSLA</sequence>
<comment type="function">
    <text evidence="1">Catalyzes the reversible oxidation of malate to oxaloacetate.</text>
</comment>
<comment type="catalytic activity">
    <reaction evidence="1">
        <text>(S)-malate + NAD(+) = oxaloacetate + NADH + H(+)</text>
        <dbReference type="Rhea" id="RHEA:21432"/>
        <dbReference type="ChEBI" id="CHEBI:15378"/>
        <dbReference type="ChEBI" id="CHEBI:15589"/>
        <dbReference type="ChEBI" id="CHEBI:16452"/>
        <dbReference type="ChEBI" id="CHEBI:57540"/>
        <dbReference type="ChEBI" id="CHEBI:57945"/>
        <dbReference type="EC" id="1.1.1.37"/>
    </reaction>
</comment>
<comment type="similarity">
    <text evidence="1">Belongs to the LDH/MDH superfamily. MDH type 3 family.</text>
</comment>
<protein>
    <recommendedName>
        <fullName evidence="1">Malate dehydrogenase</fullName>
        <ecNumber evidence="1">1.1.1.37</ecNumber>
    </recommendedName>
</protein>
<organism>
    <name type="scientific">Cereibacter sphaeroides (strain ATCC 17025 / ATH 2.4.3)</name>
    <name type="common">Rhodobacter sphaeroides</name>
    <dbReference type="NCBI Taxonomy" id="349102"/>
    <lineage>
        <taxon>Bacteria</taxon>
        <taxon>Pseudomonadati</taxon>
        <taxon>Pseudomonadota</taxon>
        <taxon>Alphaproteobacteria</taxon>
        <taxon>Rhodobacterales</taxon>
        <taxon>Paracoccaceae</taxon>
        <taxon>Cereibacter</taxon>
    </lineage>
</organism>
<evidence type="ECO:0000255" key="1">
    <source>
        <dbReference type="HAMAP-Rule" id="MF_00487"/>
    </source>
</evidence>
<keyword id="KW-0520">NAD</keyword>
<keyword id="KW-0560">Oxidoreductase</keyword>
<keyword id="KW-0816">Tricarboxylic acid cycle</keyword>
<proteinExistence type="inferred from homology"/>
<gene>
    <name evidence="1" type="primary">mdh</name>
    <name type="ordered locus">Rsph17025_0080</name>
</gene>
<reference key="1">
    <citation type="submission" date="2007-04" db="EMBL/GenBank/DDBJ databases">
        <title>Complete sequence of chromosome of Rhodobacter sphaeroides ATCC 17025.</title>
        <authorList>
            <consortium name="US DOE Joint Genome Institute"/>
            <person name="Copeland A."/>
            <person name="Lucas S."/>
            <person name="Lapidus A."/>
            <person name="Barry K."/>
            <person name="Detter J.C."/>
            <person name="Glavina del Rio T."/>
            <person name="Hammon N."/>
            <person name="Israni S."/>
            <person name="Dalin E."/>
            <person name="Tice H."/>
            <person name="Pitluck S."/>
            <person name="Chertkov O."/>
            <person name="Brettin T."/>
            <person name="Bruce D."/>
            <person name="Han C."/>
            <person name="Schmutz J."/>
            <person name="Larimer F."/>
            <person name="Land M."/>
            <person name="Hauser L."/>
            <person name="Kyrpides N."/>
            <person name="Kim E."/>
            <person name="Richardson P."/>
            <person name="Mackenzie C."/>
            <person name="Choudhary M."/>
            <person name="Donohue T.J."/>
            <person name="Kaplan S."/>
        </authorList>
    </citation>
    <scope>NUCLEOTIDE SEQUENCE [LARGE SCALE GENOMIC DNA]</scope>
    <source>
        <strain>ATCC 17025 / ATH 2.4.3</strain>
    </source>
</reference>
<name>MDH_CERS5</name>
<feature type="chain" id="PRO_1000026487" description="Malate dehydrogenase">
    <location>
        <begin position="1"/>
        <end position="320"/>
    </location>
</feature>
<feature type="active site" description="Proton acceptor" evidence="1">
    <location>
        <position position="176"/>
    </location>
</feature>
<feature type="binding site" evidence="1">
    <location>
        <begin position="10"/>
        <end position="15"/>
    </location>
    <ligand>
        <name>NAD(+)</name>
        <dbReference type="ChEBI" id="CHEBI:57540"/>
    </ligand>
</feature>
<feature type="binding site" evidence="1">
    <location>
        <position position="34"/>
    </location>
    <ligand>
        <name>NAD(+)</name>
        <dbReference type="ChEBI" id="CHEBI:57540"/>
    </ligand>
</feature>
<feature type="binding site" evidence="1">
    <location>
        <position position="83"/>
    </location>
    <ligand>
        <name>substrate</name>
    </ligand>
</feature>
<feature type="binding site" evidence="1">
    <location>
        <position position="89"/>
    </location>
    <ligand>
        <name>substrate</name>
    </ligand>
</feature>
<feature type="binding site" evidence="1">
    <location>
        <position position="96"/>
    </location>
    <ligand>
        <name>NAD(+)</name>
        <dbReference type="ChEBI" id="CHEBI:57540"/>
    </ligand>
</feature>
<feature type="binding site" evidence="1">
    <location>
        <begin position="119"/>
        <end position="121"/>
    </location>
    <ligand>
        <name>NAD(+)</name>
        <dbReference type="ChEBI" id="CHEBI:57540"/>
    </ligand>
</feature>
<feature type="binding site" evidence="1">
    <location>
        <position position="121"/>
    </location>
    <ligand>
        <name>substrate</name>
    </ligand>
</feature>
<feature type="binding site" evidence="1">
    <location>
        <position position="152"/>
    </location>
    <ligand>
        <name>substrate</name>
    </ligand>
</feature>